<organism>
    <name type="scientific">Oryza sativa subsp. japonica</name>
    <name type="common">Rice</name>
    <dbReference type="NCBI Taxonomy" id="39947"/>
    <lineage>
        <taxon>Eukaryota</taxon>
        <taxon>Viridiplantae</taxon>
        <taxon>Streptophyta</taxon>
        <taxon>Embryophyta</taxon>
        <taxon>Tracheophyta</taxon>
        <taxon>Spermatophyta</taxon>
        <taxon>Magnoliopsida</taxon>
        <taxon>Liliopsida</taxon>
        <taxon>Poales</taxon>
        <taxon>Poaceae</taxon>
        <taxon>BOP clade</taxon>
        <taxon>Oryzoideae</taxon>
        <taxon>Oryzeae</taxon>
        <taxon>Oryzinae</taxon>
        <taxon>Oryza</taxon>
        <taxon>Oryza sativa</taxon>
    </lineage>
</organism>
<accession>Q5VRH4</accession>
<accession>A0A0P0WRA6</accession>
<accession>Q0DFB9</accession>
<gene>
    <name type="primary">HGO</name>
    <name evidence="3" type="ordered locus">Os06g0103300</name>
    <name evidence="2" type="ordered locus">LOC_Os06g01360</name>
    <name evidence="4" type="ORF">OsJ_19811</name>
    <name type="ORF">OSJNBa0075G19.26</name>
</gene>
<comment type="catalytic activity">
    <reaction>
        <text>homogentisate + O2 = 4-maleylacetoacetate + H(+)</text>
        <dbReference type="Rhea" id="RHEA:15449"/>
        <dbReference type="ChEBI" id="CHEBI:15378"/>
        <dbReference type="ChEBI" id="CHEBI:15379"/>
        <dbReference type="ChEBI" id="CHEBI:16169"/>
        <dbReference type="ChEBI" id="CHEBI:17105"/>
        <dbReference type="EC" id="1.13.11.5"/>
    </reaction>
</comment>
<comment type="cofactor">
    <cofactor evidence="1">
        <name>Fe cation</name>
        <dbReference type="ChEBI" id="CHEBI:24875"/>
    </cofactor>
</comment>
<comment type="pathway">
    <text>Amino-acid degradation; L-phenylalanine degradation; acetoacetate and fumarate from L-phenylalanine: step 4/6.</text>
</comment>
<comment type="similarity">
    <text evidence="2">Belongs to the homogentisate dioxygenase family.</text>
</comment>
<evidence type="ECO:0000250" key="1"/>
<evidence type="ECO:0000305" key="2"/>
<evidence type="ECO:0000312" key="3">
    <source>
        <dbReference type="EMBL" id="BAF18454.1"/>
    </source>
</evidence>
<evidence type="ECO:0000312" key="4">
    <source>
        <dbReference type="EMBL" id="EEE64940.1"/>
    </source>
</evidence>
<sequence length="470" mass="51771">MAMATATPAAQNEQQEKGGLEYVYLSGLGNSLSSEAVAGTLPRGQNSPLVCPLGLYAEQLSGTPFTAPRARNLRTWLYRIKPSVTHEPFHPRRPAHPRLIGDFDRTTTDTVATPTQLRWRPADVPPHHPPLDFIDGLYTVCGAGSSFLRHGYAIHMYAANKSMDGCAFCNADGDFLIVPQQGKLLITTECGKLLVPPGEIVVIPQGFRFAVDLPDGPSRGYVSEIFGTHFQLPDLGPIGANGLASARDFLSPTAWFEQVHRPGYTIVQKYGGELFTATQDFSPFNVVAWHGNYVPYKYDLSKFCPFNTVLFDHADPSVNTVLTAPTDKPGVALLDFVIFPPRWLVAENTFRPPYYHRNCMSEFMGLIYGIYEAKADGFLPGGASLHSCMTPHGPDTKTYEATISRPDANEPSRLSGTLAFMFESALIPRVCQWALDSPSRDLDYYQCWIGLKSHFSHDNGGATSEEPCRK</sequence>
<dbReference type="EC" id="1.13.11.5"/>
<dbReference type="EMBL" id="AP002842">
    <property type="protein sequence ID" value="BAD67951.1"/>
    <property type="molecule type" value="Genomic_DNA"/>
</dbReference>
<dbReference type="EMBL" id="AP008212">
    <property type="protein sequence ID" value="BAF18454.1"/>
    <property type="molecule type" value="Genomic_DNA"/>
</dbReference>
<dbReference type="EMBL" id="AP014962">
    <property type="protein sequence ID" value="BAS95715.1"/>
    <property type="molecule type" value="Genomic_DNA"/>
</dbReference>
<dbReference type="EMBL" id="CM000143">
    <property type="protein sequence ID" value="EEE64940.1"/>
    <property type="molecule type" value="Genomic_DNA"/>
</dbReference>
<dbReference type="EMBL" id="AK065189">
    <property type="status" value="NOT_ANNOTATED_CDS"/>
    <property type="molecule type" value="mRNA"/>
</dbReference>
<dbReference type="RefSeq" id="XP_015643393.1">
    <property type="nucleotide sequence ID" value="XM_015787907.1"/>
</dbReference>
<dbReference type="SMR" id="Q5VRH4"/>
<dbReference type="FunCoup" id="Q5VRH4">
    <property type="interactions" value="635"/>
</dbReference>
<dbReference type="STRING" id="39947.Q5VRH4"/>
<dbReference type="PaxDb" id="39947-Q5VRH4"/>
<dbReference type="EnsemblPlants" id="Os06t0103300-01">
    <property type="protein sequence ID" value="Os06t0103300-01"/>
    <property type="gene ID" value="Os06g0103300"/>
</dbReference>
<dbReference type="Gramene" id="Os06t0103300-01">
    <property type="protein sequence ID" value="Os06t0103300-01"/>
    <property type="gene ID" value="Os06g0103300"/>
</dbReference>
<dbReference type="KEGG" id="dosa:Os06g0103300"/>
<dbReference type="eggNOG" id="KOG1417">
    <property type="taxonomic scope" value="Eukaryota"/>
</dbReference>
<dbReference type="HOGENOM" id="CLU_027174_0_0_1"/>
<dbReference type="InParanoid" id="Q5VRH4"/>
<dbReference type="OMA" id="MLPHGPD"/>
<dbReference type="OrthoDB" id="1689029at2759"/>
<dbReference type="PlantReactome" id="R-OSA-1119506">
    <property type="pathway name" value="tyrosine degradation I"/>
</dbReference>
<dbReference type="UniPathway" id="UPA00139">
    <property type="reaction ID" value="UER00339"/>
</dbReference>
<dbReference type="Proteomes" id="UP000000763">
    <property type="component" value="Chromosome 6"/>
</dbReference>
<dbReference type="Proteomes" id="UP000007752">
    <property type="component" value="Chromosome 6"/>
</dbReference>
<dbReference type="Proteomes" id="UP000059680">
    <property type="component" value="Chromosome 6"/>
</dbReference>
<dbReference type="ExpressionAtlas" id="Q5VRH4">
    <property type="expression patterns" value="baseline and differential"/>
</dbReference>
<dbReference type="GO" id="GO:0004411">
    <property type="term" value="F:homogentisate 1,2-dioxygenase activity"/>
    <property type="evidence" value="ECO:0000318"/>
    <property type="project" value="GO_Central"/>
</dbReference>
<dbReference type="GO" id="GO:0046872">
    <property type="term" value="F:metal ion binding"/>
    <property type="evidence" value="ECO:0007669"/>
    <property type="project" value="UniProtKB-KW"/>
</dbReference>
<dbReference type="GO" id="GO:1902000">
    <property type="term" value="P:homogentisate catabolic process"/>
    <property type="evidence" value="ECO:0007669"/>
    <property type="project" value="EnsemblPlants"/>
</dbReference>
<dbReference type="GO" id="GO:0006559">
    <property type="term" value="P:L-phenylalanine catabolic process"/>
    <property type="evidence" value="ECO:0000318"/>
    <property type="project" value="GO_Central"/>
</dbReference>
<dbReference type="GO" id="GO:0006572">
    <property type="term" value="P:tyrosine catabolic process"/>
    <property type="evidence" value="ECO:0007669"/>
    <property type="project" value="UniProtKB-KW"/>
</dbReference>
<dbReference type="CDD" id="cd07000">
    <property type="entry name" value="cupin_HGO_N"/>
    <property type="match status" value="1"/>
</dbReference>
<dbReference type="FunFam" id="2.60.120.10:FF:000069">
    <property type="entry name" value="Homogentisate 1,2-dioxygenase"/>
    <property type="match status" value="1"/>
</dbReference>
<dbReference type="Gene3D" id="2.60.120.10">
    <property type="entry name" value="Jelly Rolls"/>
    <property type="match status" value="1"/>
</dbReference>
<dbReference type="InterPro" id="IPR046451">
    <property type="entry name" value="HgmA_C"/>
</dbReference>
<dbReference type="InterPro" id="IPR046452">
    <property type="entry name" value="HgmA_N"/>
</dbReference>
<dbReference type="InterPro" id="IPR005708">
    <property type="entry name" value="Homogentis_dOase"/>
</dbReference>
<dbReference type="InterPro" id="IPR014710">
    <property type="entry name" value="RmlC-like_jellyroll"/>
</dbReference>
<dbReference type="InterPro" id="IPR011051">
    <property type="entry name" value="RmlC_Cupin_sf"/>
</dbReference>
<dbReference type="NCBIfam" id="TIGR01015">
    <property type="entry name" value="hmgA"/>
    <property type="match status" value="1"/>
</dbReference>
<dbReference type="PANTHER" id="PTHR11056">
    <property type="entry name" value="HOMOGENTISATE 1,2-DIOXYGENASE"/>
    <property type="match status" value="1"/>
</dbReference>
<dbReference type="PANTHER" id="PTHR11056:SF0">
    <property type="entry name" value="HOMOGENTISATE 1,2-DIOXYGENASE"/>
    <property type="match status" value="1"/>
</dbReference>
<dbReference type="Pfam" id="PF04209">
    <property type="entry name" value="HgmA_C"/>
    <property type="match status" value="1"/>
</dbReference>
<dbReference type="Pfam" id="PF20510">
    <property type="entry name" value="HgmA_N"/>
    <property type="match status" value="1"/>
</dbReference>
<dbReference type="SUPFAM" id="SSF51182">
    <property type="entry name" value="RmlC-like cupins"/>
    <property type="match status" value="1"/>
</dbReference>
<reference key="1">
    <citation type="journal article" date="2005" name="Nature">
        <title>The map-based sequence of the rice genome.</title>
        <authorList>
            <consortium name="International rice genome sequencing project (IRGSP)"/>
        </authorList>
    </citation>
    <scope>NUCLEOTIDE SEQUENCE [LARGE SCALE GENOMIC DNA]</scope>
    <source>
        <strain>cv. Nipponbare</strain>
    </source>
</reference>
<reference key="2">
    <citation type="journal article" date="2008" name="Nucleic Acids Res.">
        <title>The rice annotation project database (RAP-DB): 2008 update.</title>
        <authorList>
            <consortium name="The rice annotation project (RAP)"/>
        </authorList>
    </citation>
    <scope>GENOME REANNOTATION</scope>
    <source>
        <strain>cv. Nipponbare</strain>
    </source>
</reference>
<reference key="3">
    <citation type="journal article" date="2013" name="Rice">
        <title>Improvement of the Oryza sativa Nipponbare reference genome using next generation sequence and optical map data.</title>
        <authorList>
            <person name="Kawahara Y."/>
            <person name="de la Bastide M."/>
            <person name="Hamilton J.P."/>
            <person name="Kanamori H."/>
            <person name="McCombie W.R."/>
            <person name="Ouyang S."/>
            <person name="Schwartz D.C."/>
            <person name="Tanaka T."/>
            <person name="Wu J."/>
            <person name="Zhou S."/>
            <person name="Childs K.L."/>
            <person name="Davidson R.M."/>
            <person name="Lin H."/>
            <person name="Quesada-Ocampo L."/>
            <person name="Vaillancourt B."/>
            <person name="Sakai H."/>
            <person name="Lee S.S."/>
            <person name="Kim J."/>
            <person name="Numa H."/>
            <person name="Itoh T."/>
            <person name="Buell C.R."/>
            <person name="Matsumoto T."/>
        </authorList>
    </citation>
    <scope>GENOME REANNOTATION</scope>
    <source>
        <strain>cv. Nipponbare</strain>
    </source>
</reference>
<reference key="4">
    <citation type="journal article" date="2005" name="PLoS Biol.">
        <title>The genomes of Oryza sativa: a history of duplications.</title>
        <authorList>
            <person name="Yu J."/>
            <person name="Wang J."/>
            <person name="Lin W."/>
            <person name="Li S."/>
            <person name="Li H."/>
            <person name="Zhou J."/>
            <person name="Ni P."/>
            <person name="Dong W."/>
            <person name="Hu S."/>
            <person name="Zeng C."/>
            <person name="Zhang J."/>
            <person name="Zhang Y."/>
            <person name="Li R."/>
            <person name="Xu Z."/>
            <person name="Li S."/>
            <person name="Li X."/>
            <person name="Zheng H."/>
            <person name="Cong L."/>
            <person name="Lin L."/>
            <person name="Yin J."/>
            <person name="Geng J."/>
            <person name="Li G."/>
            <person name="Shi J."/>
            <person name="Liu J."/>
            <person name="Lv H."/>
            <person name="Li J."/>
            <person name="Wang J."/>
            <person name="Deng Y."/>
            <person name="Ran L."/>
            <person name="Shi X."/>
            <person name="Wang X."/>
            <person name="Wu Q."/>
            <person name="Li C."/>
            <person name="Ren X."/>
            <person name="Wang J."/>
            <person name="Wang X."/>
            <person name="Li D."/>
            <person name="Liu D."/>
            <person name="Zhang X."/>
            <person name="Ji Z."/>
            <person name="Zhao W."/>
            <person name="Sun Y."/>
            <person name="Zhang Z."/>
            <person name="Bao J."/>
            <person name="Han Y."/>
            <person name="Dong L."/>
            <person name="Ji J."/>
            <person name="Chen P."/>
            <person name="Wu S."/>
            <person name="Liu J."/>
            <person name="Xiao Y."/>
            <person name="Bu D."/>
            <person name="Tan J."/>
            <person name="Yang L."/>
            <person name="Ye C."/>
            <person name="Zhang J."/>
            <person name="Xu J."/>
            <person name="Zhou Y."/>
            <person name="Yu Y."/>
            <person name="Zhang B."/>
            <person name="Zhuang S."/>
            <person name="Wei H."/>
            <person name="Liu B."/>
            <person name="Lei M."/>
            <person name="Yu H."/>
            <person name="Li Y."/>
            <person name="Xu H."/>
            <person name="Wei S."/>
            <person name="He X."/>
            <person name="Fang L."/>
            <person name="Zhang Z."/>
            <person name="Zhang Y."/>
            <person name="Huang X."/>
            <person name="Su Z."/>
            <person name="Tong W."/>
            <person name="Li J."/>
            <person name="Tong Z."/>
            <person name="Li S."/>
            <person name="Ye J."/>
            <person name="Wang L."/>
            <person name="Fang L."/>
            <person name="Lei T."/>
            <person name="Chen C.-S."/>
            <person name="Chen H.-C."/>
            <person name="Xu Z."/>
            <person name="Li H."/>
            <person name="Huang H."/>
            <person name="Zhang F."/>
            <person name="Xu H."/>
            <person name="Li N."/>
            <person name="Zhao C."/>
            <person name="Li S."/>
            <person name="Dong L."/>
            <person name="Huang Y."/>
            <person name="Li L."/>
            <person name="Xi Y."/>
            <person name="Qi Q."/>
            <person name="Li W."/>
            <person name="Zhang B."/>
            <person name="Hu W."/>
            <person name="Zhang Y."/>
            <person name="Tian X."/>
            <person name="Jiao Y."/>
            <person name="Liang X."/>
            <person name="Jin J."/>
            <person name="Gao L."/>
            <person name="Zheng W."/>
            <person name="Hao B."/>
            <person name="Liu S.-M."/>
            <person name="Wang W."/>
            <person name="Yuan L."/>
            <person name="Cao M."/>
            <person name="McDermott J."/>
            <person name="Samudrala R."/>
            <person name="Wang J."/>
            <person name="Wong G.K.-S."/>
            <person name="Yang H."/>
        </authorList>
    </citation>
    <scope>NUCLEOTIDE SEQUENCE [LARGE SCALE GENOMIC DNA]</scope>
    <source>
        <strain>cv. Nipponbare</strain>
    </source>
</reference>
<reference key="5">
    <citation type="journal article" date="2003" name="Science">
        <title>Collection, mapping, and annotation of over 28,000 cDNA clones from japonica rice.</title>
        <authorList>
            <consortium name="The rice full-length cDNA consortium"/>
        </authorList>
    </citation>
    <scope>NUCLEOTIDE SEQUENCE [LARGE SCALE MRNA]</scope>
    <source>
        <strain>cv. Nipponbare</strain>
    </source>
</reference>
<protein>
    <recommendedName>
        <fullName>Homogentisate 1,2-dioxygenase</fullName>
        <ecNumber>1.13.11.5</ecNumber>
    </recommendedName>
    <alternativeName>
        <fullName>Homogentisate oxygenase</fullName>
    </alternativeName>
    <alternativeName>
        <fullName>Homogentisic acid oxidase</fullName>
    </alternativeName>
    <alternativeName>
        <fullName>Homogentisicase</fullName>
    </alternativeName>
</protein>
<keyword id="KW-0223">Dioxygenase</keyword>
<keyword id="KW-0408">Iron</keyword>
<keyword id="KW-0479">Metal-binding</keyword>
<keyword id="KW-0560">Oxidoreductase</keyword>
<keyword id="KW-0585">Phenylalanine catabolism</keyword>
<keyword id="KW-1185">Reference proteome</keyword>
<keyword id="KW-0828">Tyrosine catabolism</keyword>
<proteinExistence type="evidence at transcript level"/>
<feature type="chain" id="PRO_0000247478" description="Homogentisate 1,2-dioxygenase">
    <location>
        <begin position="1"/>
        <end position="470"/>
    </location>
</feature>
<feature type="binding site" evidence="1">
    <location>
        <position position="356"/>
    </location>
    <ligand>
        <name>Fe cation</name>
        <dbReference type="ChEBI" id="CHEBI:24875"/>
    </ligand>
</feature>
<feature type="binding site" evidence="1">
    <location>
        <position position="362"/>
    </location>
    <ligand>
        <name>Fe cation</name>
        <dbReference type="ChEBI" id="CHEBI:24875"/>
    </ligand>
</feature>
<feature type="binding site" evidence="1">
    <location>
        <position position="392"/>
    </location>
    <ligand>
        <name>Fe cation</name>
        <dbReference type="ChEBI" id="CHEBI:24875"/>
    </ligand>
</feature>
<feature type="sequence conflict" description="In Ref. 5; AK065189." evidence="2" ref="5">
    <original>M</original>
    <variation>V</variation>
    <location>
        <position position="421"/>
    </location>
</feature>
<name>HGD_ORYSJ</name>